<comment type="subcellular location">
    <subcellularLocation>
        <location>Plastid</location>
        <location>Chloroplast</location>
    </subcellularLocation>
</comment>
<protein>
    <recommendedName>
        <fullName>Uncharacterized 7.3 kDa protein in petA 5'region</fullName>
    </recommendedName>
    <alternativeName>
        <fullName>ORF62</fullName>
    </alternativeName>
</protein>
<accession>P35006</accession>
<geneLocation type="chloroplast"/>
<organism>
    <name type="scientific">Chlamydomonas reinhardtii</name>
    <name type="common">Chlamydomonas smithii</name>
    <dbReference type="NCBI Taxonomy" id="3055"/>
    <lineage>
        <taxon>Eukaryota</taxon>
        <taxon>Viridiplantae</taxon>
        <taxon>Chlorophyta</taxon>
        <taxon>core chlorophytes</taxon>
        <taxon>Chlorophyceae</taxon>
        <taxon>CS clade</taxon>
        <taxon>Chlamydomonadales</taxon>
        <taxon>Chlamydomonadaceae</taxon>
        <taxon>Chlamydomonas</taxon>
    </lineage>
</organism>
<proteinExistence type="predicted"/>
<reference key="1">
    <citation type="journal article" date="1991" name="Plant Cell Physiol.">
        <title>Structural analysis and expression during dark-light transitions of a gene for cytochrome f in Chlamydomonas reinhardtii.</title>
        <authorList>
            <person name="Matsumoto T."/>
            <person name="Matsuo M."/>
            <person name="Matsuda Y."/>
        </authorList>
    </citation>
    <scope>NUCLEOTIDE SEQUENCE [GENOMIC DNA]</scope>
</reference>
<reference key="2">
    <citation type="journal article" date="2009" name="BMC Evol. Biol.">
        <title>Nucleotide diversity of the Chlamydomonas reinhardtii plastid genome: addressing the mutational-hazard hypothesis.</title>
        <authorList>
            <person name="Smith D.R."/>
            <person name="Lee R.W."/>
        </authorList>
    </citation>
    <scope>NUCLEOTIDE SEQUENCE [LARGE SCALE GENOMIC DNA]</scope>
    <source>
        <strain>CC-503</strain>
    </source>
</reference>
<reference key="3">
    <citation type="journal article" date="2002" name="Plant Cell">
        <title>The Chlamydomonas reinhardtii plastid chromosome: islands of genes in a sea of repeats.</title>
        <authorList>
            <person name="Maul J.E."/>
            <person name="Lilly J.W."/>
            <person name="Cui L."/>
            <person name="dePamphilis C.W."/>
            <person name="Miller W."/>
            <person name="Harris E.H."/>
            <person name="Stern D.B."/>
        </authorList>
    </citation>
    <scope>IDENTIFICATION</scope>
    <scope>COMPLETE PLASTID GENOME</scope>
</reference>
<sequence length="62" mass="7296">MGRGLSTKKFYFKIGVQLKSNWNPLIDKLISILKLNSFYSSFVLRLIKLCLTKYLLLYAQQH</sequence>
<dbReference type="EMBL" id="D01036">
    <property type="protein sequence ID" value="BAA00843.1"/>
    <property type="molecule type" value="Genomic_DNA"/>
</dbReference>
<dbReference type="EMBL" id="FJ423446">
    <property type="status" value="NOT_ANNOTATED_CDS"/>
    <property type="molecule type" value="Genomic_DNA"/>
</dbReference>
<dbReference type="EMBL" id="BK000554">
    <property type="status" value="NOT_ANNOTATED_CDS"/>
    <property type="molecule type" value="Genomic_DNA"/>
</dbReference>
<dbReference type="PIR" id="JQ2237">
    <property type="entry name" value="JQ0925"/>
</dbReference>
<dbReference type="SMR" id="P35006"/>
<dbReference type="STRING" id="3055.P35006"/>
<dbReference type="InParanoid" id="P35006"/>
<dbReference type="Proteomes" id="UP000006906">
    <property type="component" value="Chloroplast"/>
</dbReference>
<dbReference type="GO" id="GO:0009507">
    <property type="term" value="C:chloroplast"/>
    <property type="evidence" value="ECO:0007669"/>
    <property type="project" value="UniProtKB-SubCell"/>
</dbReference>
<feature type="chain" id="PRO_0000217499" description="Uncharacterized 7.3 kDa protein in petA 5'region">
    <location>
        <begin position="1"/>
        <end position="62"/>
    </location>
</feature>
<keyword id="KW-0150">Chloroplast</keyword>
<keyword id="KW-0934">Plastid</keyword>
<keyword id="KW-1185">Reference proteome</keyword>
<name>YCX4_CHLRE</name>